<feature type="chain" id="PRO_1000126939" description="Large ribosomal subunit protein bL9">
    <location>
        <begin position="1"/>
        <end position="190"/>
    </location>
</feature>
<reference key="1">
    <citation type="submission" date="2008-03" db="EMBL/GenBank/DDBJ databases">
        <title>Complete sequence of chromosome of Methylobacterium radiotolerans JCM 2831.</title>
        <authorList>
            <consortium name="US DOE Joint Genome Institute"/>
            <person name="Copeland A."/>
            <person name="Lucas S."/>
            <person name="Lapidus A."/>
            <person name="Glavina del Rio T."/>
            <person name="Dalin E."/>
            <person name="Tice H."/>
            <person name="Bruce D."/>
            <person name="Goodwin L."/>
            <person name="Pitluck S."/>
            <person name="Kiss H."/>
            <person name="Brettin T."/>
            <person name="Detter J.C."/>
            <person name="Han C."/>
            <person name="Kuske C.R."/>
            <person name="Schmutz J."/>
            <person name="Larimer F."/>
            <person name="Land M."/>
            <person name="Hauser L."/>
            <person name="Kyrpides N."/>
            <person name="Mikhailova N."/>
            <person name="Marx C.J."/>
            <person name="Richardson P."/>
        </authorList>
    </citation>
    <scope>NUCLEOTIDE SEQUENCE [LARGE SCALE GENOMIC DNA]</scope>
    <source>
        <strain>ATCC 27329 / DSM 1819 / JCM 2831 / NBRC 15690 / NCIMB 10815 / 0-1</strain>
    </source>
</reference>
<gene>
    <name evidence="1" type="primary">rplI</name>
    <name type="ordered locus">Mrad2831_5418</name>
</gene>
<proteinExistence type="inferred from homology"/>
<dbReference type="EMBL" id="CP001001">
    <property type="protein sequence ID" value="ACB27365.1"/>
    <property type="molecule type" value="Genomic_DNA"/>
</dbReference>
<dbReference type="RefSeq" id="WP_012322309.1">
    <property type="nucleotide sequence ID" value="NC_010505.1"/>
</dbReference>
<dbReference type="SMR" id="B1LYI1"/>
<dbReference type="STRING" id="426355.Mrad2831_5418"/>
<dbReference type="GeneID" id="6141491"/>
<dbReference type="KEGG" id="mrd:Mrad2831_5418"/>
<dbReference type="eggNOG" id="COG0359">
    <property type="taxonomic scope" value="Bacteria"/>
</dbReference>
<dbReference type="HOGENOM" id="CLU_078938_1_0_5"/>
<dbReference type="OrthoDB" id="9788336at2"/>
<dbReference type="Proteomes" id="UP000006589">
    <property type="component" value="Chromosome"/>
</dbReference>
<dbReference type="GO" id="GO:1990904">
    <property type="term" value="C:ribonucleoprotein complex"/>
    <property type="evidence" value="ECO:0007669"/>
    <property type="project" value="UniProtKB-KW"/>
</dbReference>
<dbReference type="GO" id="GO:0005840">
    <property type="term" value="C:ribosome"/>
    <property type="evidence" value="ECO:0007669"/>
    <property type="project" value="UniProtKB-KW"/>
</dbReference>
<dbReference type="GO" id="GO:0019843">
    <property type="term" value="F:rRNA binding"/>
    <property type="evidence" value="ECO:0007669"/>
    <property type="project" value="UniProtKB-UniRule"/>
</dbReference>
<dbReference type="GO" id="GO:0003735">
    <property type="term" value="F:structural constituent of ribosome"/>
    <property type="evidence" value="ECO:0007669"/>
    <property type="project" value="InterPro"/>
</dbReference>
<dbReference type="GO" id="GO:0006412">
    <property type="term" value="P:translation"/>
    <property type="evidence" value="ECO:0007669"/>
    <property type="project" value="UniProtKB-UniRule"/>
</dbReference>
<dbReference type="Gene3D" id="3.10.430.100">
    <property type="entry name" value="Ribosomal protein L9, C-terminal domain"/>
    <property type="match status" value="1"/>
</dbReference>
<dbReference type="Gene3D" id="3.40.5.10">
    <property type="entry name" value="Ribosomal protein L9, N-terminal domain"/>
    <property type="match status" value="1"/>
</dbReference>
<dbReference type="HAMAP" id="MF_00503">
    <property type="entry name" value="Ribosomal_bL9"/>
    <property type="match status" value="1"/>
</dbReference>
<dbReference type="InterPro" id="IPR000244">
    <property type="entry name" value="Ribosomal_bL9"/>
</dbReference>
<dbReference type="InterPro" id="IPR009027">
    <property type="entry name" value="Ribosomal_bL9/RNase_H1_N"/>
</dbReference>
<dbReference type="InterPro" id="IPR020594">
    <property type="entry name" value="Ribosomal_bL9_bac/chp"/>
</dbReference>
<dbReference type="InterPro" id="IPR020069">
    <property type="entry name" value="Ribosomal_bL9_C"/>
</dbReference>
<dbReference type="InterPro" id="IPR036791">
    <property type="entry name" value="Ribosomal_bL9_C_sf"/>
</dbReference>
<dbReference type="InterPro" id="IPR020070">
    <property type="entry name" value="Ribosomal_bL9_N"/>
</dbReference>
<dbReference type="InterPro" id="IPR036935">
    <property type="entry name" value="Ribosomal_bL9_N_sf"/>
</dbReference>
<dbReference type="NCBIfam" id="TIGR00158">
    <property type="entry name" value="L9"/>
    <property type="match status" value="1"/>
</dbReference>
<dbReference type="PANTHER" id="PTHR21368">
    <property type="entry name" value="50S RIBOSOMAL PROTEIN L9"/>
    <property type="match status" value="1"/>
</dbReference>
<dbReference type="Pfam" id="PF03948">
    <property type="entry name" value="Ribosomal_L9_C"/>
    <property type="match status" value="1"/>
</dbReference>
<dbReference type="Pfam" id="PF01281">
    <property type="entry name" value="Ribosomal_L9_N"/>
    <property type="match status" value="1"/>
</dbReference>
<dbReference type="SUPFAM" id="SSF55658">
    <property type="entry name" value="L9 N-domain-like"/>
    <property type="match status" value="1"/>
</dbReference>
<dbReference type="SUPFAM" id="SSF55653">
    <property type="entry name" value="Ribosomal protein L9 C-domain"/>
    <property type="match status" value="1"/>
</dbReference>
<dbReference type="PROSITE" id="PS00651">
    <property type="entry name" value="RIBOSOMAL_L9"/>
    <property type="match status" value="1"/>
</dbReference>
<sequence>MEVILLERVAKLGQMGETVNVRPGFARNFLLARGKALRATEANKKHFEAQRAQLEARNLDRKKDAEVVAEKLNGQSFILIRQSGETGVLYGSVSTRDLAEVVSKEGFTVDRGQFTLNQPIKTLGLHTVPVVLHPEVEVEITVNVARSPEEAERQARGESVTEREAFNLDDLGLEVGQALADAGEGADDRG</sequence>
<evidence type="ECO:0000255" key="1">
    <source>
        <dbReference type="HAMAP-Rule" id="MF_00503"/>
    </source>
</evidence>
<evidence type="ECO:0000305" key="2"/>
<comment type="function">
    <text evidence="1">Binds to the 23S rRNA.</text>
</comment>
<comment type="similarity">
    <text evidence="1">Belongs to the bacterial ribosomal protein bL9 family.</text>
</comment>
<name>RL9_METRJ</name>
<accession>B1LYI1</accession>
<organism>
    <name type="scientific">Methylobacterium radiotolerans (strain ATCC 27329 / DSM 1819 / JCM 2831 / NBRC 15690 / NCIMB 10815 / 0-1)</name>
    <dbReference type="NCBI Taxonomy" id="426355"/>
    <lineage>
        <taxon>Bacteria</taxon>
        <taxon>Pseudomonadati</taxon>
        <taxon>Pseudomonadota</taxon>
        <taxon>Alphaproteobacteria</taxon>
        <taxon>Hyphomicrobiales</taxon>
        <taxon>Methylobacteriaceae</taxon>
        <taxon>Methylobacterium</taxon>
    </lineage>
</organism>
<keyword id="KW-0687">Ribonucleoprotein</keyword>
<keyword id="KW-0689">Ribosomal protein</keyword>
<keyword id="KW-0694">RNA-binding</keyword>
<keyword id="KW-0699">rRNA-binding</keyword>
<protein>
    <recommendedName>
        <fullName evidence="1">Large ribosomal subunit protein bL9</fullName>
    </recommendedName>
    <alternativeName>
        <fullName evidence="2">50S ribosomal protein L9</fullName>
    </alternativeName>
</protein>